<accession>Q5JJ65</accession>
<keyword id="KW-0067">ATP-binding</keyword>
<keyword id="KW-0436">Ligase</keyword>
<keyword id="KW-0460">Magnesium</keyword>
<keyword id="KW-0479">Metal-binding</keyword>
<keyword id="KW-0520">NAD</keyword>
<keyword id="KW-0547">Nucleotide-binding</keyword>
<keyword id="KW-1185">Reference proteome</keyword>
<organism>
    <name type="scientific">Thermococcus kodakarensis (strain ATCC BAA-918 / JCM 12380 / KOD1)</name>
    <name type="common">Pyrococcus kodakaraensis (strain KOD1)</name>
    <dbReference type="NCBI Taxonomy" id="69014"/>
    <lineage>
        <taxon>Archaea</taxon>
        <taxon>Methanobacteriati</taxon>
        <taxon>Methanobacteriota</taxon>
        <taxon>Thermococci</taxon>
        <taxon>Thermococcales</taxon>
        <taxon>Thermococcaceae</taxon>
        <taxon>Thermococcus</taxon>
    </lineage>
</organism>
<protein>
    <recommendedName>
        <fullName evidence="1">NH(3)-dependent NAD(+) synthetase</fullName>
        <ecNumber evidence="1">6.3.1.5</ecNumber>
    </recommendedName>
</protein>
<evidence type="ECO:0000255" key="1">
    <source>
        <dbReference type="HAMAP-Rule" id="MF_00193"/>
    </source>
</evidence>
<dbReference type="EC" id="6.3.1.5" evidence="1"/>
<dbReference type="EMBL" id="AP006878">
    <property type="protein sequence ID" value="BAD85987.1"/>
    <property type="molecule type" value="Genomic_DNA"/>
</dbReference>
<dbReference type="RefSeq" id="WP_011250749.1">
    <property type="nucleotide sequence ID" value="NC_006624.1"/>
</dbReference>
<dbReference type="SMR" id="Q5JJ65"/>
<dbReference type="FunCoup" id="Q5JJ65">
    <property type="interactions" value="55"/>
</dbReference>
<dbReference type="STRING" id="69014.TK1798"/>
<dbReference type="EnsemblBacteria" id="BAD85987">
    <property type="protein sequence ID" value="BAD85987"/>
    <property type="gene ID" value="TK1798"/>
</dbReference>
<dbReference type="GeneID" id="78448329"/>
<dbReference type="KEGG" id="tko:TK1798"/>
<dbReference type="PATRIC" id="fig|69014.16.peg.1754"/>
<dbReference type="eggNOG" id="arCOG00069">
    <property type="taxonomic scope" value="Archaea"/>
</dbReference>
<dbReference type="HOGENOM" id="CLU_059327_1_1_2"/>
<dbReference type="InParanoid" id="Q5JJ65"/>
<dbReference type="OrthoDB" id="39312at2157"/>
<dbReference type="PhylomeDB" id="Q5JJ65"/>
<dbReference type="UniPathway" id="UPA00253">
    <property type="reaction ID" value="UER00333"/>
</dbReference>
<dbReference type="Proteomes" id="UP000000536">
    <property type="component" value="Chromosome"/>
</dbReference>
<dbReference type="GO" id="GO:0005737">
    <property type="term" value="C:cytoplasm"/>
    <property type="evidence" value="ECO:0000318"/>
    <property type="project" value="GO_Central"/>
</dbReference>
<dbReference type="GO" id="GO:0005524">
    <property type="term" value="F:ATP binding"/>
    <property type="evidence" value="ECO:0007669"/>
    <property type="project" value="UniProtKB-UniRule"/>
</dbReference>
<dbReference type="GO" id="GO:0004359">
    <property type="term" value="F:glutaminase activity"/>
    <property type="evidence" value="ECO:0007669"/>
    <property type="project" value="InterPro"/>
</dbReference>
<dbReference type="GO" id="GO:0046872">
    <property type="term" value="F:metal ion binding"/>
    <property type="evidence" value="ECO:0007669"/>
    <property type="project" value="UniProtKB-KW"/>
</dbReference>
<dbReference type="GO" id="GO:0003952">
    <property type="term" value="F:NAD+ synthase (glutamine-hydrolyzing) activity"/>
    <property type="evidence" value="ECO:0007669"/>
    <property type="project" value="InterPro"/>
</dbReference>
<dbReference type="GO" id="GO:0008795">
    <property type="term" value="F:NAD+ synthase activity"/>
    <property type="evidence" value="ECO:0007669"/>
    <property type="project" value="UniProtKB-UniRule"/>
</dbReference>
<dbReference type="GO" id="GO:0009435">
    <property type="term" value="P:NAD biosynthetic process"/>
    <property type="evidence" value="ECO:0000318"/>
    <property type="project" value="GO_Central"/>
</dbReference>
<dbReference type="CDD" id="cd00553">
    <property type="entry name" value="NAD_synthase"/>
    <property type="match status" value="1"/>
</dbReference>
<dbReference type="FunFam" id="3.40.50.620:FF:000106">
    <property type="entry name" value="Glutamine-dependent NAD(+) synthetase"/>
    <property type="match status" value="1"/>
</dbReference>
<dbReference type="Gene3D" id="3.40.50.620">
    <property type="entry name" value="HUPs"/>
    <property type="match status" value="1"/>
</dbReference>
<dbReference type="HAMAP" id="MF_00193">
    <property type="entry name" value="NadE_ammonia_dep"/>
    <property type="match status" value="1"/>
</dbReference>
<dbReference type="InterPro" id="IPR022310">
    <property type="entry name" value="NAD/GMP_synthase"/>
</dbReference>
<dbReference type="InterPro" id="IPR003694">
    <property type="entry name" value="NAD_synthase"/>
</dbReference>
<dbReference type="InterPro" id="IPR022926">
    <property type="entry name" value="NH(3)-dep_NAD(+)_synth"/>
</dbReference>
<dbReference type="InterPro" id="IPR014729">
    <property type="entry name" value="Rossmann-like_a/b/a_fold"/>
</dbReference>
<dbReference type="NCBIfam" id="TIGR00552">
    <property type="entry name" value="nadE"/>
    <property type="match status" value="1"/>
</dbReference>
<dbReference type="NCBIfam" id="NF010587">
    <property type="entry name" value="PRK13980.1"/>
    <property type="match status" value="1"/>
</dbReference>
<dbReference type="PANTHER" id="PTHR23090:SF9">
    <property type="entry name" value="GLUTAMINE-DEPENDENT NAD(+) SYNTHETASE"/>
    <property type="match status" value="1"/>
</dbReference>
<dbReference type="PANTHER" id="PTHR23090">
    <property type="entry name" value="NH 3 /GLUTAMINE-DEPENDENT NAD + SYNTHETASE"/>
    <property type="match status" value="1"/>
</dbReference>
<dbReference type="Pfam" id="PF02540">
    <property type="entry name" value="NAD_synthase"/>
    <property type="match status" value="1"/>
</dbReference>
<dbReference type="SUPFAM" id="SSF52402">
    <property type="entry name" value="Adenine nucleotide alpha hydrolases-like"/>
    <property type="match status" value="1"/>
</dbReference>
<feature type="chain" id="PRO_0000152233" description="NH(3)-dependent NAD(+) synthetase">
    <location>
        <begin position="1"/>
        <end position="254"/>
    </location>
</feature>
<feature type="binding site" evidence="1">
    <location>
        <begin position="32"/>
        <end position="39"/>
    </location>
    <ligand>
        <name>ATP</name>
        <dbReference type="ChEBI" id="CHEBI:30616"/>
    </ligand>
</feature>
<feature type="binding site" evidence="1">
    <location>
        <position position="38"/>
    </location>
    <ligand>
        <name>Mg(2+)</name>
        <dbReference type="ChEBI" id="CHEBI:18420"/>
    </ligand>
</feature>
<feature type="binding site" evidence="1">
    <location>
        <position position="113"/>
    </location>
    <ligand>
        <name>deamido-NAD(+)</name>
        <dbReference type="ChEBI" id="CHEBI:58437"/>
    </ligand>
</feature>
<feature type="binding site" evidence="1">
    <location>
        <position position="133"/>
    </location>
    <ligand>
        <name>ATP</name>
        <dbReference type="ChEBI" id="CHEBI:30616"/>
    </ligand>
</feature>
<feature type="binding site" evidence="1">
    <location>
        <position position="138"/>
    </location>
    <ligand>
        <name>Mg(2+)</name>
        <dbReference type="ChEBI" id="CHEBI:18420"/>
    </ligand>
</feature>
<feature type="binding site" evidence="1">
    <location>
        <position position="146"/>
    </location>
    <ligand>
        <name>deamido-NAD(+)</name>
        <dbReference type="ChEBI" id="CHEBI:58437"/>
    </ligand>
</feature>
<feature type="binding site" evidence="1">
    <location>
        <position position="153"/>
    </location>
    <ligand>
        <name>deamido-NAD(+)</name>
        <dbReference type="ChEBI" id="CHEBI:58437"/>
    </ligand>
</feature>
<feature type="binding site" evidence="1">
    <location>
        <position position="162"/>
    </location>
    <ligand>
        <name>ATP</name>
        <dbReference type="ChEBI" id="CHEBI:30616"/>
    </ligand>
</feature>
<feature type="binding site" evidence="1">
    <location>
        <position position="184"/>
    </location>
    <ligand>
        <name>ATP</name>
        <dbReference type="ChEBI" id="CHEBI:30616"/>
    </ligand>
</feature>
<feature type="binding site" evidence="1">
    <location>
        <begin position="244"/>
        <end position="245"/>
    </location>
    <ligand>
        <name>deamido-NAD(+)</name>
        <dbReference type="ChEBI" id="CHEBI:58437"/>
    </ligand>
</feature>
<name>NADE_THEKO</name>
<comment type="function">
    <text evidence="1">Catalyzes the ATP-dependent amidation of deamido-NAD to form NAD. Uses ammonia as a nitrogen source.</text>
</comment>
<comment type="catalytic activity">
    <reaction evidence="1">
        <text>deamido-NAD(+) + NH4(+) + ATP = AMP + diphosphate + NAD(+) + H(+)</text>
        <dbReference type="Rhea" id="RHEA:21188"/>
        <dbReference type="ChEBI" id="CHEBI:15378"/>
        <dbReference type="ChEBI" id="CHEBI:28938"/>
        <dbReference type="ChEBI" id="CHEBI:30616"/>
        <dbReference type="ChEBI" id="CHEBI:33019"/>
        <dbReference type="ChEBI" id="CHEBI:57540"/>
        <dbReference type="ChEBI" id="CHEBI:58437"/>
        <dbReference type="ChEBI" id="CHEBI:456215"/>
        <dbReference type="EC" id="6.3.1.5"/>
    </reaction>
</comment>
<comment type="pathway">
    <text evidence="1">Cofactor biosynthesis; NAD(+) biosynthesis; NAD(+) from deamido-NAD(+) (ammonia route): step 1/1.</text>
</comment>
<comment type="subunit">
    <text evidence="1">Homodimer.</text>
</comment>
<comment type="similarity">
    <text evidence="1">Belongs to the NAD synthetase family.</text>
</comment>
<sequence>MRALDYRAAIETITSFLSEKLEESGSGGFVIGISGGIDSATAAYLAAKAVGTENVLGLIMPYYENNDVEDAKLVCESLGIDYEVINIKPIVESFVSQLGFQPDKRSLGNIMSRTRMILLYAHANQLNRLVLGTSNRSEFLTGYFTKWGDGASDYAPLINLYKTEVWEIAKLLGVPGRIIQKKPTAGLWEGQTDEDELGISYRLLDEILWRLVDLKMPKEKIVEELGISVEKVEYVEGLVRRSEHKRRLPVGPEF</sequence>
<gene>
    <name evidence="1" type="primary">nadE</name>
    <name type="ordered locus">TK1798</name>
</gene>
<proteinExistence type="inferred from homology"/>
<reference key="1">
    <citation type="journal article" date="2005" name="Genome Res.">
        <title>Complete genome sequence of the hyperthermophilic archaeon Thermococcus kodakaraensis KOD1 and comparison with Pyrococcus genomes.</title>
        <authorList>
            <person name="Fukui T."/>
            <person name="Atomi H."/>
            <person name="Kanai T."/>
            <person name="Matsumi R."/>
            <person name="Fujiwara S."/>
            <person name="Imanaka T."/>
        </authorList>
    </citation>
    <scope>NUCLEOTIDE SEQUENCE [LARGE SCALE GENOMIC DNA]</scope>
    <source>
        <strain>ATCC BAA-918 / JCM 12380 / KOD1</strain>
    </source>
</reference>